<sequence length="495" mass="54763">MPYIKHIETKRISARTYYGRFCVLPLPAGQGITLGNALRRILLGDLVGFAATSANLAGASHEFDTLPGIRESVLEILLNIKQLVFKQISSRPKDTNRFAMRASLNLTGPATVTAKDLVLPSWMKVVDPSQYIATLASGASLEFEIQLSQGSGYRLRRTSLVPPGFTLPPPRDPLEPENDSKSETKSKSKGKSKNTSTSDVQLADTDVNAQIIDTDSNSTETEKEAPHIPSMRDDHMTLHIDAVFFPVTRVNYRVEEEVINGRRREELVIDIWTNGSLSPRKALDQAAVILIRMLASLQAPPPLLIEPEKKPTTKTIAKEIALTPIESLDLSVRSFNCLKRANITNVGKLIAYTRQELLQLKNFGTKSASEVVDVLNSRFKLALKGEEVTDQEQVVNQPSSQIATKKGARKKVNRASRPIDSKETRRSRNPVKSTASEVPEKMLRKSSKTKVKAPKSETLPKPSKSANLQQAEESLQVPKLRRKSELSSSQNPEET</sequence>
<gene>
    <name evidence="1" type="primary">rpoA</name>
</gene>
<comment type="function">
    <text evidence="1">DNA-dependent RNA polymerase catalyzes the transcription of DNA into RNA using the four ribonucleoside triphosphates as substrates.</text>
</comment>
<comment type="catalytic activity">
    <reaction evidence="1">
        <text>RNA(n) + a ribonucleoside 5'-triphosphate = RNA(n+1) + diphosphate</text>
        <dbReference type="Rhea" id="RHEA:21248"/>
        <dbReference type="Rhea" id="RHEA-COMP:14527"/>
        <dbReference type="Rhea" id="RHEA-COMP:17342"/>
        <dbReference type="ChEBI" id="CHEBI:33019"/>
        <dbReference type="ChEBI" id="CHEBI:61557"/>
        <dbReference type="ChEBI" id="CHEBI:140395"/>
        <dbReference type="EC" id="2.7.7.6"/>
    </reaction>
</comment>
<comment type="subunit">
    <text evidence="1">In plastids the minimal PEP RNA polymerase catalytic core is composed of four subunits: alpha, beta, beta', and beta''. When a (nuclear-encoded) sigma factor is associated with the core the holoenzyme is formed, which can initiate transcription.</text>
</comment>
<comment type="subcellular location">
    <subcellularLocation>
        <location>Plastid</location>
        <location>Chloroplast</location>
    </subcellularLocation>
</comment>
<comment type="domain">
    <text evidence="1">The N-terminal domain is essential for RNAP assembly and basal transcription, whereas the C-terminal domain is involved in interaction with transcriptional regulators and with upstream promoter elements.</text>
</comment>
<comment type="similarity">
    <text evidence="1">Belongs to the RNA polymerase alpha chain family.</text>
</comment>
<comment type="caution">
    <text evidence="3">This protein is predicted to be unusually long in N.olivacea.</text>
</comment>
<organism>
    <name type="scientific">Nephroselmis olivacea</name>
    <name type="common">Green alga</name>
    <dbReference type="NCBI Taxonomy" id="31312"/>
    <lineage>
        <taxon>Eukaryota</taxon>
        <taxon>Viridiplantae</taxon>
        <taxon>Chlorophyta</taxon>
        <taxon>Nephroselmidophyceae</taxon>
        <taxon>Nephroselmidales</taxon>
        <taxon>Nephroselmidaceae</taxon>
        <taxon>Nephroselmis</taxon>
    </lineage>
</organism>
<feature type="chain" id="PRO_0000175472" description="DNA-directed RNA polymerase subunit alpha">
    <location>
        <begin position="1"/>
        <end position="495"/>
    </location>
</feature>
<feature type="region of interest" description="Alpha N-terminal domain (alpha-NTD)" evidence="1">
    <location>
        <begin position="1"/>
        <end position="301"/>
    </location>
</feature>
<feature type="region of interest" description="Disordered" evidence="2">
    <location>
        <begin position="159"/>
        <end position="227"/>
    </location>
</feature>
<feature type="region of interest" description="Insert">
    <location>
        <begin position="170"/>
        <end position="237"/>
    </location>
</feature>
<feature type="region of interest" description="Alpha C-terminal domain (alpha-CTD)" evidence="1">
    <location>
        <begin position="317"/>
        <end position="495"/>
    </location>
</feature>
<feature type="region of interest" description="Disordered" evidence="2">
    <location>
        <begin position="391"/>
        <end position="495"/>
    </location>
</feature>
<feature type="compositionally biased region" description="Basic and acidic residues" evidence="2">
    <location>
        <begin position="172"/>
        <end position="186"/>
    </location>
</feature>
<feature type="compositionally biased region" description="Polar residues" evidence="2">
    <location>
        <begin position="207"/>
        <end position="219"/>
    </location>
</feature>
<feature type="compositionally biased region" description="Polar residues" evidence="2">
    <location>
        <begin position="391"/>
        <end position="403"/>
    </location>
</feature>
<feature type="compositionally biased region" description="Basic and acidic residues" evidence="2">
    <location>
        <begin position="417"/>
        <end position="426"/>
    </location>
</feature>
<feature type="compositionally biased region" description="Basic residues" evidence="2">
    <location>
        <begin position="444"/>
        <end position="453"/>
    </location>
</feature>
<feature type="compositionally biased region" description="Polar residues" evidence="2">
    <location>
        <begin position="464"/>
        <end position="473"/>
    </location>
</feature>
<feature type="compositionally biased region" description="Polar residues" evidence="2">
    <location>
        <begin position="486"/>
        <end position="495"/>
    </location>
</feature>
<keyword id="KW-0150">Chloroplast</keyword>
<keyword id="KW-0240">DNA-directed RNA polymerase</keyword>
<keyword id="KW-0548">Nucleotidyltransferase</keyword>
<keyword id="KW-0934">Plastid</keyword>
<keyword id="KW-0804">Transcription</keyword>
<keyword id="KW-0808">Transferase</keyword>
<accession>Q9TL28</accession>
<protein>
    <recommendedName>
        <fullName evidence="1">DNA-directed RNA polymerase subunit alpha</fullName>
        <shortName evidence="1">PEP</shortName>
        <ecNumber evidence="1">2.7.7.6</ecNumber>
    </recommendedName>
    <alternativeName>
        <fullName evidence="1">Plastid-encoded RNA polymerase subunit alpha</fullName>
        <shortName evidence="1">RNA polymerase subunit alpha</shortName>
    </alternativeName>
</protein>
<proteinExistence type="inferred from homology"/>
<evidence type="ECO:0000255" key="1">
    <source>
        <dbReference type="HAMAP-Rule" id="MF_00059"/>
    </source>
</evidence>
<evidence type="ECO:0000256" key="2">
    <source>
        <dbReference type="SAM" id="MobiDB-lite"/>
    </source>
</evidence>
<evidence type="ECO:0000305" key="3"/>
<geneLocation type="chloroplast"/>
<reference key="1">
    <citation type="journal article" date="1999" name="Proc. Natl. Acad. Sci. U.S.A.">
        <title>The complete chloroplast DNA sequence of the green alga Nephroselmis olivacea: insights into the architecture of ancestral chloroplast genomes.</title>
        <authorList>
            <person name="Turmel M."/>
            <person name="Otis C."/>
            <person name="Lemieux C."/>
        </authorList>
    </citation>
    <scope>NUCLEOTIDE SEQUENCE [LARGE SCALE GENOMIC DNA]</scope>
    <source>
        <strain>NIES-484 / S-N-5-8</strain>
    </source>
</reference>
<name>RPOA_NEPOL</name>
<dbReference type="EC" id="2.7.7.6" evidence="1"/>
<dbReference type="EMBL" id="AF137379">
    <property type="protein sequence ID" value="AAD54788.1"/>
    <property type="molecule type" value="Genomic_DNA"/>
</dbReference>
<dbReference type="RefSeq" id="NP_050817.1">
    <property type="nucleotide sequence ID" value="NC_000927.1"/>
</dbReference>
<dbReference type="SMR" id="Q9TL28"/>
<dbReference type="GeneID" id="802010"/>
<dbReference type="GO" id="GO:0009507">
    <property type="term" value="C:chloroplast"/>
    <property type="evidence" value="ECO:0007669"/>
    <property type="project" value="UniProtKB-SubCell"/>
</dbReference>
<dbReference type="GO" id="GO:0000428">
    <property type="term" value="C:DNA-directed RNA polymerase complex"/>
    <property type="evidence" value="ECO:0007669"/>
    <property type="project" value="UniProtKB-KW"/>
</dbReference>
<dbReference type="GO" id="GO:0005739">
    <property type="term" value="C:mitochondrion"/>
    <property type="evidence" value="ECO:0007669"/>
    <property type="project" value="GOC"/>
</dbReference>
<dbReference type="GO" id="GO:0003677">
    <property type="term" value="F:DNA binding"/>
    <property type="evidence" value="ECO:0007669"/>
    <property type="project" value="UniProtKB-UniRule"/>
</dbReference>
<dbReference type="GO" id="GO:0003899">
    <property type="term" value="F:DNA-directed RNA polymerase activity"/>
    <property type="evidence" value="ECO:0007669"/>
    <property type="project" value="UniProtKB-UniRule"/>
</dbReference>
<dbReference type="GO" id="GO:0046983">
    <property type="term" value="F:protein dimerization activity"/>
    <property type="evidence" value="ECO:0007669"/>
    <property type="project" value="InterPro"/>
</dbReference>
<dbReference type="GO" id="GO:0006351">
    <property type="term" value="P:DNA-templated transcription"/>
    <property type="evidence" value="ECO:0007669"/>
    <property type="project" value="UniProtKB-UniRule"/>
</dbReference>
<dbReference type="CDD" id="cd06928">
    <property type="entry name" value="RNAP_alpha_NTD"/>
    <property type="match status" value="1"/>
</dbReference>
<dbReference type="Gene3D" id="1.10.150.20">
    <property type="entry name" value="5' to 3' exonuclease, C-terminal subdomain"/>
    <property type="match status" value="1"/>
</dbReference>
<dbReference type="Gene3D" id="2.170.120.12">
    <property type="entry name" value="DNA-directed RNA polymerase, insert domain"/>
    <property type="match status" value="1"/>
</dbReference>
<dbReference type="Gene3D" id="3.30.1360.10">
    <property type="entry name" value="RNA polymerase, RBP11-like subunit"/>
    <property type="match status" value="1"/>
</dbReference>
<dbReference type="HAMAP" id="MF_00059">
    <property type="entry name" value="RNApol_bact_RpoA"/>
    <property type="match status" value="1"/>
</dbReference>
<dbReference type="InterPro" id="IPR011262">
    <property type="entry name" value="DNA-dir_RNA_pol_insert"/>
</dbReference>
<dbReference type="InterPro" id="IPR011263">
    <property type="entry name" value="DNA-dir_RNA_pol_RpoA/D/Rpb3"/>
</dbReference>
<dbReference type="InterPro" id="IPR011773">
    <property type="entry name" value="DNA-dir_RpoA"/>
</dbReference>
<dbReference type="InterPro" id="IPR036603">
    <property type="entry name" value="RBP11-like"/>
</dbReference>
<dbReference type="InterPro" id="IPR011260">
    <property type="entry name" value="RNAP_asu_C"/>
</dbReference>
<dbReference type="InterPro" id="IPR036643">
    <property type="entry name" value="RNApol_insert_sf"/>
</dbReference>
<dbReference type="Pfam" id="PF01000">
    <property type="entry name" value="RNA_pol_A_bac"/>
    <property type="match status" value="1"/>
</dbReference>
<dbReference type="Pfam" id="PF03118">
    <property type="entry name" value="RNA_pol_A_CTD"/>
    <property type="match status" value="1"/>
</dbReference>
<dbReference type="Pfam" id="PF01193">
    <property type="entry name" value="RNA_pol_L"/>
    <property type="match status" value="1"/>
</dbReference>
<dbReference type="SMART" id="SM00662">
    <property type="entry name" value="RPOLD"/>
    <property type="match status" value="1"/>
</dbReference>
<dbReference type="SUPFAM" id="SSF47789">
    <property type="entry name" value="C-terminal domain of RNA polymerase alpha subunit"/>
    <property type="match status" value="1"/>
</dbReference>
<dbReference type="SUPFAM" id="SSF56553">
    <property type="entry name" value="Insert subdomain of RNA polymerase alpha subunit"/>
    <property type="match status" value="1"/>
</dbReference>
<dbReference type="SUPFAM" id="SSF55257">
    <property type="entry name" value="RBP11-like subunits of RNA polymerase"/>
    <property type="match status" value="1"/>
</dbReference>